<gene>
    <name evidence="1" type="primary">rimO</name>
    <name type="ordered locus">ECP_0849</name>
</gene>
<comment type="function">
    <text evidence="1">Catalyzes the methylthiolation of an aspartic acid residue of ribosomal protein uS12.</text>
</comment>
<comment type="catalytic activity">
    <reaction evidence="1">
        <text>L-aspartate(89)-[ribosomal protein uS12]-hydrogen + (sulfur carrier)-SH + AH2 + 2 S-adenosyl-L-methionine = 3-methylsulfanyl-L-aspartate(89)-[ribosomal protein uS12]-hydrogen + (sulfur carrier)-H + 5'-deoxyadenosine + L-methionine + A + S-adenosyl-L-homocysteine + 2 H(+)</text>
        <dbReference type="Rhea" id="RHEA:37087"/>
        <dbReference type="Rhea" id="RHEA-COMP:10460"/>
        <dbReference type="Rhea" id="RHEA-COMP:10461"/>
        <dbReference type="Rhea" id="RHEA-COMP:14737"/>
        <dbReference type="Rhea" id="RHEA-COMP:14739"/>
        <dbReference type="ChEBI" id="CHEBI:13193"/>
        <dbReference type="ChEBI" id="CHEBI:15378"/>
        <dbReference type="ChEBI" id="CHEBI:17319"/>
        <dbReference type="ChEBI" id="CHEBI:17499"/>
        <dbReference type="ChEBI" id="CHEBI:29917"/>
        <dbReference type="ChEBI" id="CHEBI:29961"/>
        <dbReference type="ChEBI" id="CHEBI:57844"/>
        <dbReference type="ChEBI" id="CHEBI:57856"/>
        <dbReference type="ChEBI" id="CHEBI:59789"/>
        <dbReference type="ChEBI" id="CHEBI:64428"/>
        <dbReference type="ChEBI" id="CHEBI:73599"/>
        <dbReference type="EC" id="2.8.4.4"/>
    </reaction>
</comment>
<comment type="cofactor">
    <cofactor evidence="1">
        <name>[4Fe-4S] cluster</name>
        <dbReference type="ChEBI" id="CHEBI:49883"/>
    </cofactor>
    <text evidence="1">Binds 2 [4Fe-4S] clusters. One cluster is coordinated with 3 cysteines and an exchangeable S-adenosyl-L-methionine.</text>
</comment>
<comment type="subcellular location">
    <subcellularLocation>
        <location evidence="1">Cytoplasm</location>
    </subcellularLocation>
</comment>
<comment type="similarity">
    <text evidence="1">Belongs to the methylthiotransferase family. RimO subfamily.</text>
</comment>
<reference key="1">
    <citation type="journal article" date="2006" name="Mol. Microbiol.">
        <title>Role of pathogenicity island-associated integrases in the genome plasticity of uropathogenic Escherichia coli strain 536.</title>
        <authorList>
            <person name="Hochhut B."/>
            <person name="Wilde C."/>
            <person name="Balling G."/>
            <person name="Middendorf B."/>
            <person name="Dobrindt U."/>
            <person name="Brzuszkiewicz E."/>
            <person name="Gottschalk G."/>
            <person name="Carniel E."/>
            <person name="Hacker J."/>
        </authorList>
    </citation>
    <scope>NUCLEOTIDE SEQUENCE [LARGE SCALE GENOMIC DNA]</scope>
    <source>
        <strain>536 / UPEC</strain>
    </source>
</reference>
<keyword id="KW-0004">4Fe-4S</keyword>
<keyword id="KW-0963">Cytoplasm</keyword>
<keyword id="KW-0408">Iron</keyword>
<keyword id="KW-0411">Iron-sulfur</keyword>
<keyword id="KW-0479">Metal-binding</keyword>
<keyword id="KW-0949">S-adenosyl-L-methionine</keyword>
<keyword id="KW-0808">Transferase</keyword>
<proteinExistence type="inferred from homology"/>
<protein>
    <recommendedName>
        <fullName evidence="1">Ribosomal protein uS12 methylthiotransferase RimO</fullName>
        <shortName evidence="1">uS12 MTTase</shortName>
        <shortName evidence="1">uS12 methylthiotransferase</shortName>
        <ecNumber evidence="1">2.8.4.4</ecNumber>
    </recommendedName>
    <alternativeName>
        <fullName evidence="1">Ribosomal protein uS12 (aspartate-C(3))-methylthiotransferase</fullName>
    </alternativeName>
    <alternativeName>
        <fullName evidence="1">Ribosome maturation factor RimO</fullName>
    </alternativeName>
</protein>
<sequence length="441" mass="49581">MSKVTPQPKIGFVSLGCPKNLVDSERILTELRTEGYDVVPSYDDADMVIVNTCGFIDSAVQESLEAIGEALNENGKVIVTGCLGAKEDQIREVHPKVLEITGPHSYEQVLEHVHHYVPKPKHNPFLSLVPEQGVKLTPRHYAYLKISEGCNHRCTFCIIPSMRGDLVSRPIGEVLSEAKRLVDAGVKEILVISQDTSAYGVDVKHRTGFHNGEPVKTSMVSLCEQLSKLGIWTRLHYVYPYPHVDDVIPLMAEGKILPYLDIPLQHASPRILKLMKRPGSVDRQLARIKQWRKICPELTLRSTFIVGFPGETEEDFQMLLDFLKEARLDRVGCFKYSPVEGADANALPDQVPEEVKEERWNRFMQLQQQISAERLQEKVGREILVIIDEVDEEGAIGRSMADAPEIDGAVYLNGETNVKPGDILRVKVEHADEYDLWGSRV</sequence>
<dbReference type="EC" id="2.8.4.4" evidence="1"/>
<dbReference type="EMBL" id="CP000247">
    <property type="protein sequence ID" value="ABG68866.1"/>
    <property type="molecule type" value="Genomic_DNA"/>
</dbReference>
<dbReference type="RefSeq" id="WP_000049378.1">
    <property type="nucleotide sequence ID" value="NC_008253.1"/>
</dbReference>
<dbReference type="SMR" id="Q0TJL3"/>
<dbReference type="KEGG" id="ecp:ECP_0849"/>
<dbReference type="HOGENOM" id="CLU_018697_0_0_6"/>
<dbReference type="Proteomes" id="UP000009182">
    <property type="component" value="Chromosome"/>
</dbReference>
<dbReference type="GO" id="GO:0005829">
    <property type="term" value="C:cytosol"/>
    <property type="evidence" value="ECO:0007669"/>
    <property type="project" value="TreeGrafter"/>
</dbReference>
<dbReference type="GO" id="GO:0051539">
    <property type="term" value="F:4 iron, 4 sulfur cluster binding"/>
    <property type="evidence" value="ECO:0007669"/>
    <property type="project" value="UniProtKB-UniRule"/>
</dbReference>
<dbReference type="GO" id="GO:0035599">
    <property type="term" value="F:aspartic acid methylthiotransferase activity"/>
    <property type="evidence" value="ECO:0007669"/>
    <property type="project" value="TreeGrafter"/>
</dbReference>
<dbReference type="GO" id="GO:0046872">
    <property type="term" value="F:metal ion binding"/>
    <property type="evidence" value="ECO:0007669"/>
    <property type="project" value="UniProtKB-KW"/>
</dbReference>
<dbReference type="GO" id="GO:0103039">
    <property type="term" value="F:protein methylthiotransferase activity"/>
    <property type="evidence" value="ECO:0007669"/>
    <property type="project" value="UniProtKB-EC"/>
</dbReference>
<dbReference type="GO" id="GO:0006400">
    <property type="term" value="P:tRNA modification"/>
    <property type="evidence" value="ECO:0007669"/>
    <property type="project" value="InterPro"/>
</dbReference>
<dbReference type="CDD" id="cd01335">
    <property type="entry name" value="Radical_SAM"/>
    <property type="match status" value="1"/>
</dbReference>
<dbReference type="FunFam" id="2.40.50.140:FF:000060">
    <property type="entry name" value="Ribosomal protein S12 methylthiotransferase RimO"/>
    <property type="match status" value="1"/>
</dbReference>
<dbReference type="FunFam" id="3.40.50.12160:FF:000002">
    <property type="entry name" value="Ribosomal protein S12 methylthiotransferase RimO"/>
    <property type="match status" value="1"/>
</dbReference>
<dbReference type="FunFam" id="3.80.30.20:FF:000001">
    <property type="entry name" value="tRNA-2-methylthio-N(6)-dimethylallyladenosine synthase 2"/>
    <property type="match status" value="1"/>
</dbReference>
<dbReference type="Gene3D" id="3.40.50.12160">
    <property type="entry name" value="Methylthiotransferase, N-terminal domain"/>
    <property type="match status" value="1"/>
</dbReference>
<dbReference type="Gene3D" id="2.40.50.140">
    <property type="entry name" value="Nucleic acid-binding proteins"/>
    <property type="match status" value="1"/>
</dbReference>
<dbReference type="Gene3D" id="3.80.30.20">
    <property type="entry name" value="tm_1862 like domain"/>
    <property type="match status" value="1"/>
</dbReference>
<dbReference type="HAMAP" id="MF_01865">
    <property type="entry name" value="MTTase_RimO"/>
    <property type="match status" value="1"/>
</dbReference>
<dbReference type="InterPro" id="IPR006638">
    <property type="entry name" value="Elp3/MiaA/NifB-like_rSAM"/>
</dbReference>
<dbReference type="InterPro" id="IPR005839">
    <property type="entry name" value="Methylthiotransferase"/>
</dbReference>
<dbReference type="InterPro" id="IPR020612">
    <property type="entry name" value="Methylthiotransferase_CS"/>
</dbReference>
<dbReference type="InterPro" id="IPR013848">
    <property type="entry name" value="Methylthiotransferase_N"/>
</dbReference>
<dbReference type="InterPro" id="IPR038135">
    <property type="entry name" value="Methylthiotransferase_N_sf"/>
</dbReference>
<dbReference type="InterPro" id="IPR012340">
    <property type="entry name" value="NA-bd_OB-fold"/>
</dbReference>
<dbReference type="InterPro" id="IPR005840">
    <property type="entry name" value="Ribosomal_uS12_MeSTrfase_RimO"/>
</dbReference>
<dbReference type="InterPro" id="IPR007197">
    <property type="entry name" value="rSAM"/>
</dbReference>
<dbReference type="InterPro" id="IPR023404">
    <property type="entry name" value="rSAM_horseshoe"/>
</dbReference>
<dbReference type="InterPro" id="IPR002792">
    <property type="entry name" value="TRAM_dom"/>
</dbReference>
<dbReference type="NCBIfam" id="TIGR01125">
    <property type="entry name" value="30S ribosomal protein S12 methylthiotransferase RimO"/>
    <property type="match status" value="1"/>
</dbReference>
<dbReference type="NCBIfam" id="TIGR00089">
    <property type="entry name" value="MiaB/RimO family radical SAM methylthiotransferase"/>
    <property type="match status" value="1"/>
</dbReference>
<dbReference type="PANTHER" id="PTHR43837">
    <property type="entry name" value="RIBOSOMAL PROTEIN S12 METHYLTHIOTRANSFERASE RIMO"/>
    <property type="match status" value="1"/>
</dbReference>
<dbReference type="PANTHER" id="PTHR43837:SF1">
    <property type="entry name" value="RIBOSOMAL PROTEIN US12 METHYLTHIOTRANSFERASE RIMO"/>
    <property type="match status" value="1"/>
</dbReference>
<dbReference type="Pfam" id="PF04055">
    <property type="entry name" value="Radical_SAM"/>
    <property type="match status" value="1"/>
</dbReference>
<dbReference type="Pfam" id="PF18693">
    <property type="entry name" value="TRAM_2"/>
    <property type="match status" value="1"/>
</dbReference>
<dbReference type="Pfam" id="PF00919">
    <property type="entry name" value="UPF0004"/>
    <property type="match status" value="1"/>
</dbReference>
<dbReference type="SFLD" id="SFLDG01082">
    <property type="entry name" value="B12-binding_domain_containing"/>
    <property type="match status" value="1"/>
</dbReference>
<dbReference type="SFLD" id="SFLDS00029">
    <property type="entry name" value="Radical_SAM"/>
    <property type="match status" value="1"/>
</dbReference>
<dbReference type="SFLD" id="SFLDF00274">
    <property type="entry name" value="ribosomal_protein_S12_methylth"/>
    <property type="match status" value="1"/>
</dbReference>
<dbReference type="SMART" id="SM00729">
    <property type="entry name" value="Elp3"/>
    <property type="match status" value="1"/>
</dbReference>
<dbReference type="SUPFAM" id="SSF102114">
    <property type="entry name" value="Radical SAM enzymes"/>
    <property type="match status" value="1"/>
</dbReference>
<dbReference type="PROSITE" id="PS51449">
    <property type="entry name" value="MTTASE_N"/>
    <property type="match status" value="1"/>
</dbReference>
<dbReference type="PROSITE" id="PS01278">
    <property type="entry name" value="MTTASE_RADICAL"/>
    <property type="match status" value="1"/>
</dbReference>
<dbReference type="PROSITE" id="PS51918">
    <property type="entry name" value="RADICAL_SAM"/>
    <property type="match status" value="1"/>
</dbReference>
<dbReference type="PROSITE" id="PS50926">
    <property type="entry name" value="TRAM"/>
    <property type="match status" value="1"/>
</dbReference>
<organism>
    <name type="scientific">Escherichia coli O6:K15:H31 (strain 536 / UPEC)</name>
    <dbReference type="NCBI Taxonomy" id="362663"/>
    <lineage>
        <taxon>Bacteria</taxon>
        <taxon>Pseudomonadati</taxon>
        <taxon>Pseudomonadota</taxon>
        <taxon>Gammaproteobacteria</taxon>
        <taxon>Enterobacterales</taxon>
        <taxon>Enterobacteriaceae</taxon>
        <taxon>Escherichia</taxon>
    </lineage>
</organism>
<accession>Q0TJL3</accession>
<evidence type="ECO:0000255" key="1">
    <source>
        <dbReference type="HAMAP-Rule" id="MF_01865"/>
    </source>
</evidence>
<evidence type="ECO:0000255" key="2">
    <source>
        <dbReference type="PROSITE-ProRule" id="PRU01266"/>
    </source>
</evidence>
<feature type="chain" id="PRO_0000374828" description="Ribosomal protein uS12 methylthiotransferase RimO">
    <location>
        <begin position="1"/>
        <end position="441"/>
    </location>
</feature>
<feature type="domain" description="MTTase N-terminal" evidence="1">
    <location>
        <begin position="8"/>
        <end position="118"/>
    </location>
</feature>
<feature type="domain" description="Radical SAM core" evidence="2">
    <location>
        <begin position="136"/>
        <end position="373"/>
    </location>
</feature>
<feature type="domain" description="TRAM" evidence="1">
    <location>
        <begin position="376"/>
        <end position="441"/>
    </location>
</feature>
<feature type="binding site" evidence="1">
    <location>
        <position position="17"/>
    </location>
    <ligand>
        <name>[4Fe-4S] cluster</name>
        <dbReference type="ChEBI" id="CHEBI:49883"/>
        <label>1</label>
    </ligand>
</feature>
<feature type="binding site" evidence="1">
    <location>
        <position position="53"/>
    </location>
    <ligand>
        <name>[4Fe-4S] cluster</name>
        <dbReference type="ChEBI" id="CHEBI:49883"/>
        <label>1</label>
    </ligand>
</feature>
<feature type="binding site" evidence="1">
    <location>
        <position position="82"/>
    </location>
    <ligand>
        <name>[4Fe-4S] cluster</name>
        <dbReference type="ChEBI" id="CHEBI:49883"/>
        <label>1</label>
    </ligand>
</feature>
<feature type="binding site" evidence="1">
    <location>
        <position position="150"/>
    </location>
    <ligand>
        <name>[4Fe-4S] cluster</name>
        <dbReference type="ChEBI" id="CHEBI:49883"/>
        <label>2</label>
        <note>4Fe-4S-S-AdoMet</note>
    </ligand>
</feature>
<feature type="binding site" evidence="1">
    <location>
        <position position="154"/>
    </location>
    <ligand>
        <name>[4Fe-4S] cluster</name>
        <dbReference type="ChEBI" id="CHEBI:49883"/>
        <label>2</label>
        <note>4Fe-4S-S-AdoMet</note>
    </ligand>
</feature>
<feature type="binding site" evidence="1">
    <location>
        <position position="157"/>
    </location>
    <ligand>
        <name>[4Fe-4S] cluster</name>
        <dbReference type="ChEBI" id="CHEBI:49883"/>
        <label>2</label>
        <note>4Fe-4S-S-AdoMet</note>
    </ligand>
</feature>
<name>RIMO_ECOL5</name>